<organism>
    <name type="scientific">Phytophthora sojae</name>
    <name type="common">Soybean stem and root rot agent</name>
    <name type="synonym">Phytophthora megasperma f. sp. glycines</name>
    <dbReference type="NCBI Taxonomy" id="67593"/>
    <lineage>
        <taxon>Eukaryota</taxon>
        <taxon>Sar</taxon>
        <taxon>Stramenopiles</taxon>
        <taxon>Oomycota</taxon>
        <taxon>Peronosporales</taxon>
        <taxon>Peronosporaceae</taxon>
        <taxon>Phytophthora</taxon>
    </lineage>
</organism>
<gene>
    <name evidence="4" type="primary">Avh23</name>
</gene>
<protein>
    <recommendedName>
        <fullName evidence="4">RxLR effector protein Avh23</fullName>
    </recommendedName>
    <alternativeName>
        <fullName evidence="4">Avirulence homolog protein 23</fullName>
    </alternativeName>
</protein>
<accession>E0W544</accession>
<comment type="function">
    <text evidence="2 3">Effector that suppresses plant defense responses during the early stages of pathogen infection. Suppresses cell death induced by effectors and PAMPs in plant hosts (PubMed:21653195). Acts as a modulator of histone acetyltransferase (HAT) in plants. Avh23 binds to the ADA2 subunit of the HAT complex SAGA and disrupts its assembly by interfering with the association of ADA2 with the catalytic subunit GCN5. As such, Avh23 suppresses H3K9 acetylation mediated by the ADA2/GCN5 module and increases plant susceptibility (PubMed:28318979).</text>
</comment>
<comment type="subunit">
    <text evidence="3">Interacts with host histone acetyl transferase SAGA complex subunit ADA2.</text>
</comment>
<comment type="subcellular location">
    <subcellularLocation>
        <location evidence="3">Secreted</location>
    </subcellularLocation>
    <subcellularLocation>
        <location evidence="3">Host nucleus</location>
    </subcellularLocation>
    <subcellularLocation>
        <location evidence="3">Host cytoplasm</location>
    </subcellularLocation>
    <text evidence="3">Location into the host nucleus is required for virulence.</text>
</comment>
<comment type="induction">
    <text evidence="2">Expression is strongly up-regulated during the early stages of infection.</text>
</comment>
<comment type="domain">
    <text evidence="6">The RxLR-dEER motif acts to carry the protein into the host cell cytoplasm through binding to cell surface phosphatidylinositol-3-phosphate.</text>
</comment>
<comment type="domain">
    <text evidence="3">The two internal repeats IR1 and IR2, in the C-terminus, are required for the interaction with host ADA2.</text>
</comment>
<comment type="disruption phenotype">
    <text evidence="3">Leads to reduced virulence on etiolated soybean hypocotyls.</text>
</comment>
<comment type="similarity">
    <text evidence="5">Belongs to the RxLR effector family.</text>
</comment>
<feature type="signal peptide" evidence="1">
    <location>
        <begin position="1"/>
        <end position="21"/>
    </location>
</feature>
<feature type="chain" id="PRO_5007652751" description="RxLR effector protein Avh23" evidence="1">
    <location>
        <begin position="22"/>
        <end position="140"/>
    </location>
</feature>
<feature type="repeat" description="ADA2-binding IR1" evidence="3">
    <location>
        <begin position="100"/>
        <end position="113"/>
    </location>
</feature>
<feature type="repeat" description="ADA2-binding IR2" evidence="3">
    <location>
        <begin position="114"/>
        <end position="127"/>
    </location>
</feature>
<feature type="short sequence motif" description="RxLR-dEER" evidence="6">
    <location>
        <begin position="54"/>
        <end position="72"/>
    </location>
</feature>
<feature type="mutagenesis site" description="Impairs interaction with host ADA2 and subsequent virulence; when associated with A-110, A-112, A-123, A-124 and A-126." evidence="3">
    <original>F</original>
    <variation>A</variation>
    <location>
        <position position="109"/>
    </location>
</feature>
<feature type="mutagenesis site" description="Impairs interaction with host ADA2 and subsequent virulence; when associated with A-109, A-112, A-123, A-124 and A-126." evidence="3">
    <original>V</original>
    <variation>A</variation>
    <location>
        <position position="110"/>
    </location>
</feature>
<feature type="mutagenesis site" description="Impairs interaction with host ADA2 and subsequent virulence; when associated with A-1090, A-110, A-123, A-124 and A-1267." evidence="3">
    <original>R</original>
    <variation>A</variation>
    <location>
        <position position="112"/>
    </location>
</feature>
<feature type="mutagenesis site" description="Impairs interaction with host ADA2 and subsequent virulence; when associated with A-109, A-110, A-112, A-124 and A-126." evidence="3">
    <original>F</original>
    <variation>A</variation>
    <location>
        <position position="123"/>
    </location>
</feature>
<feature type="mutagenesis site" description="Impairs interaction with host ADA2 and subsequent virulence; when associated with A-109, A-110, A-112, A-123 and A-126." evidence="3">
    <original>V</original>
    <variation>A</variation>
    <location>
        <position position="124"/>
    </location>
</feature>
<feature type="mutagenesis site" description="Impairs interaction with host ADA2 and subsequent virulence; when associated with A-109, A-110, A-112, A-123 and A-124." evidence="3">
    <original>R</original>
    <variation>A</variation>
    <location>
        <position position="126"/>
    </location>
</feature>
<dbReference type="EMBL" id="JN253688">
    <property type="protein sequence ID" value="AEK80501.1"/>
    <property type="molecule type" value="Genomic_DNA"/>
</dbReference>
<dbReference type="EMBL" id="JN253689">
    <property type="protein sequence ID" value="AEK80502.1"/>
    <property type="molecule type" value="Genomic_DNA"/>
</dbReference>
<dbReference type="EMBL" id="JN253690">
    <property type="protein sequence ID" value="AEK80503.1"/>
    <property type="molecule type" value="Genomic_DNA"/>
</dbReference>
<dbReference type="SMR" id="E0W544"/>
<dbReference type="KEGG" id="psoj:PHYSODRAFT_286162"/>
<dbReference type="VEuPathDB" id="FungiDB:PHYSODRAFT_286162"/>
<dbReference type="HOGENOM" id="CLU_1839134_0_0_1"/>
<dbReference type="PHI-base" id="PHI:7068"/>
<dbReference type="GO" id="GO:0005576">
    <property type="term" value="C:extracellular region"/>
    <property type="evidence" value="ECO:0007669"/>
    <property type="project" value="UniProtKB-SubCell"/>
</dbReference>
<dbReference type="GO" id="GO:0030430">
    <property type="term" value="C:host cell cytoplasm"/>
    <property type="evidence" value="ECO:0007669"/>
    <property type="project" value="UniProtKB-SubCell"/>
</dbReference>
<dbReference type="GO" id="GO:0042025">
    <property type="term" value="C:host cell nucleus"/>
    <property type="evidence" value="ECO:0007669"/>
    <property type="project" value="UniProtKB-SubCell"/>
</dbReference>
<dbReference type="InterPro" id="IPR031825">
    <property type="entry name" value="RXLR"/>
</dbReference>
<dbReference type="Pfam" id="PF16810">
    <property type="entry name" value="RXLR"/>
    <property type="match status" value="1"/>
</dbReference>
<proteinExistence type="evidence at protein level"/>
<sequence length="140" mass="15470">MRLTYFLTVIVVATLHAGGTALATAEAPNHAAIVNVASADNVHSLDTTAEIGGRMLRKVKEDTVSKKDHEERGPGAILERQTAFVKKLFSRQNAIVNRAQGAFQRQNAFVNRDQGAFQRQNAFVKRAIQRQNHFKLSDNA</sequence>
<evidence type="ECO:0000255" key="1"/>
<evidence type="ECO:0000269" key="2">
    <source>
    </source>
</evidence>
<evidence type="ECO:0000269" key="3">
    <source>
    </source>
</evidence>
<evidence type="ECO:0000303" key="4">
    <source>
    </source>
</evidence>
<evidence type="ECO:0000305" key="5"/>
<evidence type="ECO:0000305" key="6">
    <source>
    </source>
</evidence>
<reference key="1">
    <citation type="journal article" date="2011" name="Plant Cell">
        <title>Transcriptional programming and functional interactions within the Phytophthora sojae RXLR effector repertoire.</title>
        <authorList>
            <person name="Wang Q."/>
            <person name="Han C."/>
            <person name="Ferreira A.O."/>
            <person name="Yu X."/>
            <person name="Ye W."/>
            <person name="Tripathy S."/>
            <person name="Kale S.D."/>
            <person name="Gu B."/>
            <person name="Sheng Y."/>
            <person name="Sui Y."/>
            <person name="Wang X."/>
            <person name="Zhang Z."/>
            <person name="Cheng B."/>
            <person name="Dong S."/>
            <person name="Shan W."/>
            <person name="Zheng X."/>
            <person name="Dou D."/>
            <person name="Tyler B.M."/>
            <person name="Wang Y."/>
        </authorList>
    </citation>
    <scope>NUCLEOTIDE SEQUENCE [GENOMIC DNA]</scope>
    <scope>FUNCTION</scope>
    <scope>INDUCTION</scope>
    <scope>DOMAIN</scope>
    <source>
        <strain>P7064</strain>
        <strain>P7074</strain>
        <strain>P7076</strain>
    </source>
</reference>
<reference key="2">
    <citation type="journal article" date="2017" name="Curr. Biol.">
        <title>A Phytophthora effector manipulates host histone acetylation and reprograms defense gene expression to promote infection.</title>
        <authorList>
            <person name="Kong L."/>
            <person name="Qiu X."/>
            <person name="Kang J."/>
            <person name="Wang Y."/>
            <person name="Chen H."/>
            <person name="Huang J."/>
            <person name="Qiu M."/>
            <person name="Zhao Y."/>
            <person name="Kong G."/>
            <person name="Ma Z."/>
            <person name="Wang Y."/>
            <person name="Ye W."/>
            <person name="Dong S."/>
            <person name="Ma W."/>
            <person name="Wang Y."/>
        </authorList>
    </citation>
    <scope>FUNCTION</scope>
    <scope>DISRUPTION PHENOTYPE</scope>
    <scope>DOMAIN</scope>
    <scope>MUTAGENESIS OF PHE-109; VAL-110; ARG-112; PHE-123; VAL-124 AND ARG-126</scope>
</reference>
<name>AVH23_PHYSO</name>
<keyword id="KW-1035">Host cytoplasm</keyword>
<keyword id="KW-1048">Host nucleus</keyword>
<keyword id="KW-0677">Repeat</keyword>
<keyword id="KW-0964">Secreted</keyword>
<keyword id="KW-0732">Signal</keyword>
<keyword id="KW-0843">Virulence</keyword>